<proteinExistence type="inferred from homology"/>
<organism>
    <name type="scientific">Acidobacterium capsulatum (strain ATCC 51196 / DSM 11244 / BCRC 80197 / JCM 7670 / NBRC 15755 / NCIMB 13165 / 161)</name>
    <dbReference type="NCBI Taxonomy" id="240015"/>
    <lineage>
        <taxon>Bacteria</taxon>
        <taxon>Pseudomonadati</taxon>
        <taxon>Acidobacteriota</taxon>
        <taxon>Terriglobia</taxon>
        <taxon>Terriglobales</taxon>
        <taxon>Acidobacteriaceae</taxon>
        <taxon>Acidobacterium</taxon>
    </lineage>
</organism>
<dbReference type="EMBL" id="CP001472">
    <property type="protein sequence ID" value="ACO34427.1"/>
    <property type="molecule type" value="Genomic_DNA"/>
</dbReference>
<dbReference type="RefSeq" id="WP_015896576.1">
    <property type="nucleotide sequence ID" value="NC_012483.1"/>
</dbReference>
<dbReference type="SMR" id="C1F634"/>
<dbReference type="STRING" id="240015.ACP_1443"/>
<dbReference type="KEGG" id="aca:ACP_1443"/>
<dbReference type="eggNOG" id="COG0255">
    <property type="taxonomic scope" value="Bacteria"/>
</dbReference>
<dbReference type="HOGENOM" id="CLU_158491_3_1_0"/>
<dbReference type="InParanoid" id="C1F634"/>
<dbReference type="OrthoDB" id="9815192at2"/>
<dbReference type="Proteomes" id="UP000002207">
    <property type="component" value="Chromosome"/>
</dbReference>
<dbReference type="GO" id="GO:1990904">
    <property type="term" value="C:ribonucleoprotein complex"/>
    <property type="evidence" value="ECO:0007669"/>
    <property type="project" value="UniProtKB-KW"/>
</dbReference>
<dbReference type="GO" id="GO:0005840">
    <property type="term" value="C:ribosome"/>
    <property type="evidence" value="ECO:0007669"/>
    <property type="project" value="UniProtKB-KW"/>
</dbReference>
<dbReference type="GO" id="GO:0003735">
    <property type="term" value="F:structural constituent of ribosome"/>
    <property type="evidence" value="ECO:0007669"/>
    <property type="project" value="InterPro"/>
</dbReference>
<dbReference type="GO" id="GO:0006412">
    <property type="term" value="P:translation"/>
    <property type="evidence" value="ECO:0007669"/>
    <property type="project" value="UniProtKB-UniRule"/>
</dbReference>
<dbReference type="CDD" id="cd00427">
    <property type="entry name" value="Ribosomal_L29_HIP"/>
    <property type="match status" value="1"/>
</dbReference>
<dbReference type="Gene3D" id="1.10.287.310">
    <property type="match status" value="1"/>
</dbReference>
<dbReference type="HAMAP" id="MF_00374">
    <property type="entry name" value="Ribosomal_uL29"/>
    <property type="match status" value="1"/>
</dbReference>
<dbReference type="InterPro" id="IPR001854">
    <property type="entry name" value="Ribosomal_uL29"/>
</dbReference>
<dbReference type="InterPro" id="IPR036049">
    <property type="entry name" value="Ribosomal_uL29_sf"/>
</dbReference>
<dbReference type="NCBIfam" id="TIGR00012">
    <property type="entry name" value="L29"/>
    <property type="match status" value="1"/>
</dbReference>
<dbReference type="Pfam" id="PF00831">
    <property type="entry name" value="Ribosomal_L29"/>
    <property type="match status" value="1"/>
</dbReference>
<dbReference type="SUPFAM" id="SSF46561">
    <property type="entry name" value="Ribosomal protein L29 (L29p)"/>
    <property type="match status" value="1"/>
</dbReference>
<evidence type="ECO:0000255" key="1">
    <source>
        <dbReference type="HAMAP-Rule" id="MF_00374"/>
    </source>
</evidence>
<evidence type="ECO:0000256" key="2">
    <source>
        <dbReference type="SAM" id="MobiDB-lite"/>
    </source>
</evidence>
<evidence type="ECO:0000305" key="3"/>
<name>RL29_ACIC5</name>
<reference key="1">
    <citation type="journal article" date="2009" name="Appl. Environ. Microbiol.">
        <title>Three genomes from the phylum Acidobacteria provide insight into the lifestyles of these microorganisms in soils.</title>
        <authorList>
            <person name="Ward N.L."/>
            <person name="Challacombe J.F."/>
            <person name="Janssen P.H."/>
            <person name="Henrissat B."/>
            <person name="Coutinho P.M."/>
            <person name="Wu M."/>
            <person name="Xie G."/>
            <person name="Haft D.H."/>
            <person name="Sait M."/>
            <person name="Badger J."/>
            <person name="Barabote R.D."/>
            <person name="Bradley B."/>
            <person name="Brettin T.S."/>
            <person name="Brinkac L.M."/>
            <person name="Bruce D."/>
            <person name="Creasy T."/>
            <person name="Daugherty S.C."/>
            <person name="Davidsen T.M."/>
            <person name="DeBoy R.T."/>
            <person name="Detter J.C."/>
            <person name="Dodson R.J."/>
            <person name="Durkin A.S."/>
            <person name="Ganapathy A."/>
            <person name="Gwinn-Giglio M."/>
            <person name="Han C.S."/>
            <person name="Khouri H."/>
            <person name="Kiss H."/>
            <person name="Kothari S.P."/>
            <person name="Madupu R."/>
            <person name="Nelson K.E."/>
            <person name="Nelson W.C."/>
            <person name="Paulsen I."/>
            <person name="Penn K."/>
            <person name="Ren Q."/>
            <person name="Rosovitz M.J."/>
            <person name="Selengut J.D."/>
            <person name="Shrivastava S."/>
            <person name="Sullivan S.A."/>
            <person name="Tapia R."/>
            <person name="Thompson L.S."/>
            <person name="Watkins K.L."/>
            <person name="Yang Q."/>
            <person name="Yu C."/>
            <person name="Zafar N."/>
            <person name="Zhou L."/>
            <person name="Kuske C.R."/>
        </authorList>
    </citation>
    <scope>NUCLEOTIDE SEQUENCE [LARGE SCALE GENOMIC DNA]</scope>
    <source>
        <strain>ATCC 51196 / DSM 11244 / BCRC 80197 / JCM 7670 / NBRC 15755 / NCIMB 13165 / 161</strain>
    </source>
</reference>
<accession>C1F634</accession>
<keyword id="KW-1185">Reference proteome</keyword>
<keyword id="KW-0687">Ribonucleoprotein</keyword>
<keyword id="KW-0689">Ribosomal protein</keyword>
<protein>
    <recommendedName>
        <fullName evidence="1">Large ribosomal subunit protein uL29</fullName>
    </recommendedName>
    <alternativeName>
        <fullName evidence="3">50S ribosomal protein L29</fullName>
    </alternativeName>
</protein>
<feature type="chain" id="PRO_1000193990" description="Large ribosomal subunit protein uL29">
    <location>
        <begin position="1"/>
        <end position="91"/>
    </location>
</feature>
<feature type="region of interest" description="Disordered" evidence="2">
    <location>
        <begin position="67"/>
        <end position="91"/>
    </location>
</feature>
<feature type="compositionally biased region" description="Basic residues" evidence="2">
    <location>
        <begin position="79"/>
        <end position="91"/>
    </location>
</feature>
<sequence length="91" mass="10465">MELDKIRNLSDEELKVEDNKAQEQLFRLRFQMKMGQTEGVKKLRELKKDVARIRTISRERVLAIRGAAPLAESSAPAKTKSRARKSKKEAL</sequence>
<comment type="similarity">
    <text evidence="1">Belongs to the universal ribosomal protein uL29 family.</text>
</comment>
<gene>
    <name evidence="1" type="primary">rpmC</name>
    <name type="ordered locus">ACP_1443</name>
</gene>